<proteinExistence type="inferred from homology"/>
<accession>B8N9X2</accession>
<protein>
    <recommendedName>
        <fullName>Tethering factor for nuclear proteasome sts1</fullName>
    </recommendedName>
</protein>
<gene>
    <name type="primary">sts1</name>
    <name type="ORF">AFLA_112680</name>
</gene>
<keyword id="KW-0963">Cytoplasm</keyword>
<keyword id="KW-0539">Nucleus</keyword>
<keyword id="KW-0653">Protein transport</keyword>
<keyword id="KW-0813">Transport</keyword>
<sequence>MNSLVATPPVPPHFYEYSRLSSSRPMSTPTYTPNSRKRKADDDGNDHDGRMSASPTSSPAFTPRSLPSRNMKRARPNVSGRPLSLPRLLETLDTDALRGVLRSMCERHPGLVDEVVHTAPRPSVSSALQVLRNYQSTLQSSFPLGGNPASDYAYNRVRQPLSNLLDALSDFTPHFLPPNEIQPSLSLNYLDGATEIIHALPRWHTPQNNIERDSAYDEICKAWILVIREAAKRGGGIQLQYGGWDQKLAKHNQNSGGKLQAAVNELGASLGWMHGPETQSHASPGGNDFGSIREQLLSGTYGLGTPVKVGPW</sequence>
<feature type="chain" id="PRO_0000409397" description="Tethering factor for nuclear proteasome sts1">
    <location>
        <begin position="1"/>
        <end position="312"/>
    </location>
</feature>
<feature type="region of interest" description="Disordered" evidence="2">
    <location>
        <begin position="1"/>
        <end position="82"/>
    </location>
</feature>
<feature type="compositionally biased region" description="Polar residues" evidence="2">
    <location>
        <begin position="19"/>
        <end position="34"/>
    </location>
</feature>
<feature type="compositionally biased region" description="Basic and acidic residues" evidence="2">
    <location>
        <begin position="39"/>
        <end position="50"/>
    </location>
</feature>
<feature type="compositionally biased region" description="Low complexity" evidence="2">
    <location>
        <begin position="52"/>
        <end position="65"/>
    </location>
</feature>
<reference key="1">
    <citation type="journal article" date="2015" name="Genome Announc.">
        <title>Genome sequence of Aspergillus flavus NRRL 3357, a strain that causes aflatoxin contamination of food and feed.</title>
        <authorList>
            <person name="Nierman W.C."/>
            <person name="Yu J."/>
            <person name="Fedorova-Abrams N.D."/>
            <person name="Losada L."/>
            <person name="Cleveland T.E."/>
            <person name="Bhatnagar D."/>
            <person name="Bennett J.W."/>
            <person name="Dean R."/>
            <person name="Payne G.A."/>
        </authorList>
    </citation>
    <scope>NUCLEOTIDE SEQUENCE [LARGE SCALE GENOMIC DNA]</scope>
    <source>
        <strain>ATCC 200026 / FGSC A1120 / IAM 13836 / NRRL 3357 / JCM 12722 / SRRC 167</strain>
    </source>
</reference>
<dbReference type="EMBL" id="EQ963475">
    <property type="protein sequence ID" value="EED53891.1"/>
    <property type="molecule type" value="Genomic_DNA"/>
</dbReference>
<dbReference type="RefSeq" id="XP_002377137.1">
    <property type="nucleotide sequence ID" value="XM_002377096.1"/>
</dbReference>
<dbReference type="SMR" id="B8N9X2"/>
<dbReference type="STRING" id="332952.B8N9X2"/>
<dbReference type="EnsemblFungi" id="EED53891">
    <property type="protein sequence ID" value="EED53891"/>
    <property type="gene ID" value="AFLA_112680"/>
</dbReference>
<dbReference type="VEuPathDB" id="FungiDB:AFLA_007210"/>
<dbReference type="eggNOG" id="ENOG502RNK4">
    <property type="taxonomic scope" value="Eukaryota"/>
</dbReference>
<dbReference type="HOGENOM" id="CLU_033658_0_0_1"/>
<dbReference type="OMA" id="DYTPHFL"/>
<dbReference type="GO" id="GO:0005737">
    <property type="term" value="C:cytoplasm"/>
    <property type="evidence" value="ECO:0007669"/>
    <property type="project" value="UniProtKB-SubCell"/>
</dbReference>
<dbReference type="GO" id="GO:0031965">
    <property type="term" value="C:nuclear membrane"/>
    <property type="evidence" value="ECO:0007669"/>
    <property type="project" value="TreeGrafter"/>
</dbReference>
<dbReference type="GO" id="GO:0070628">
    <property type="term" value="F:proteasome binding"/>
    <property type="evidence" value="ECO:0007669"/>
    <property type="project" value="TreeGrafter"/>
</dbReference>
<dbReference type="GO" id="GO:0071630">
    <property type="term" value="P:nuclear protein quality control by the ubiquitin-proteasome system"/>
    <property type="evidence" value="ECO:0007669"/>
    <property type="project" value="InterPro"/>
</dbReference>
<dbReference type="GO" id="GO:0031144">
    <property type="term" value="P:proteasome localization"/>
    <property type="evidence" value="ECO:0007669"/>
    <property type="project" value="InterPro"/>
</dbReference>
<dbReference type="GO" id="GO:0015031">
    <property type="term" value="P:protein transport"/>
    <property type="evidence" value="ECO:0007669"/>
    <property type="project" value="UniProtKB-KW"/>
</dbReference>
<dbReference type="FunFam" id="1.20.58.1590:FF:000001">
    <property type="entry name" value="Tethering factor for nuclear proteasome STS1"/>
    <property type="match status" value="1"/>
</dbReference>
<dbReference type="Gene3D" id="1.20.58.1590">
    <property type="entry name" value="Tethering factor for nuclear proteasome Cut8/Sts1"/>
    <property type="match status" value="1"/>
</dbReference>
<dbReference type="InterPro" id="IPR013868">
    <property type="entry name" value="Cut8/Sts1_fam"/>
</dbReference>
<dbReference type="InterPro" id="IPR038422">
    <property type="entry name" value="Cut8/Sts1_sf"/>
</dbReference>
<dbReference type="PANTHER" id="PTHR28032">
    <property type="entry name" value="FI02826P"/>
    <property type="match status" value="1"/>
</dbReference>
<dbReference type="PANTHER" id="PTHR28032:SF1">
    <property type="entry name" value="FI02826P"/>
    <property type="match status" value="1"/>
</dbReference>
<dbReference type="Pfam" id="PF08559">
    <property type="entry name" value="Cut8"/>
    <property type="match status" value="1"/>
</dbReference>
<comment type="function">
    <text evidence="1">Involved in ubiquitin-mediated protein degradation. Regulatory factor in the ubiquitin/proteasome pathway that controls the turnover of proteasome substrates. Targets proteasomes to the nucleus and facilitates the degradation of nuclear proteins (By similarity).</text>
</comment>
<comment type="subunit">
    <text evidence="1">Binds the proteasome.</text>
</comment>
<comment type="subcellular location">
    <subcellularLocation>
        <location evidence="1">Cytoplasm</location>
    </subcellularLocation>
    <subcellularLocation>
        <location evidence="1">Nucleus</location>
    </subcellularLocation>
</comment>
<comment type="similarity">
    <text evidence="3">Belongs to the cut8/STS1 family.</text>
</comment>
<organism>
    <name type="scientific">Aspergillus flavus (strain ATCC 200026 / FGSC A1120 / IAM 13836 / NRRL 3357 / JCM 12722 / SRRC 167)</name>
    <dbReference type="NCBI Taxonomy" id="332952"/>
    <lineage>
        <taxon>Eukaryota</taxon>
        <taxon>Fungi</taxon>
        <taxon>Dikarya</taxon>
        <taxon>Ascomycota</taxon>
        <taxon>Pezizomycotina</taxon>
        <taxon>Eurotiomycetes</taxon>
        <taxon>Eurotiomycetidae</taxon>
        <taxon>Eurotiales</taxon>
        <taxon>Aspergillaceae</taxon>
        <taxon>Aspergillus</taxon>
        <taxon>Aspergillus subgen. Circumdati</taxon>
    </lineage>
</organism>
<name>STS1_ASPFN</name>
<evidence type="ECO:0000250" key="1"/>
<evidence type="ECO:0000256" key="2">
    <source>
        <dbReference type="SAM" id="MobiDB-lite"/>
    </source>
</evidence>
<evidence type="ECO:0000305" key="3"/>